<comment type="function">
    <text evidence="1">Component of the lipopolysaccharide (LPS) transport (Lpt) pathway that promotes efficient assembly of the outer membrane LPS translocon (LptDE) by the BAM complex (By similarity). Facilitates oxidative maturation of LptD by stabilizing a conformation of the LPS translocon in which LptD can efficiently acquire native disulfide bonds, thereby activating the LPS translocon (By similarity).</text>
</comment>
<comment type="subunit">
    <text evidence="1">Interacts with the outer membrane embedded portion of the LPS translocon formed by LptD and LptE (LptDE).</text>
</comment>
<comment type="subcellular location">
    <subcellularLocation>
        <location evidence="1">Cell outer membrane</location>
        <topology evidence="2">Lipid-anchor</topology>
    </subcellularLocation>
</comment>
<comment type="similarity">
    <text evidence="4">Belongs to the LptM family.</text>
</comment>
<accession>P0ADN7</accession>
<accession>P39166</accession>
<accession>Q8X3Y5</accession>
<feature type="signal peptide" evidence="2">
    <location>
        <begin position="1"/>
        <end position="19"/>
    </location>
</feature>
<feature type="chain" id="PRO_0000043225" description="LPS-assembly lipoprotein LptM">
    <location>
        <begin position="20"/>
        <end position="67"/>
    </location>
</feature>
<feature type="region of interest" description="Disordered" evidence="3">
    <location>
        <begin position="26"/>
        <end position="67"/>
    </location>
</feature>
<feature type="compositionally biased region" description="Polar residues" evidence="3">
    <location>
        <begin position="42"/>
        <end position="51"/>
    </location>
</feature>
<feature type="lipid moiety-binding region" description="N-palmitoyl cysteine" evidence="2">
    <location>
        <position position="20"/>
    </location>
</feature>
<feature type="lipid moiety-binding region" description="S-diacylglycerol cysteine" evidence="2">
    <location>
        <position position="20"/>
    </location>
</feature>
<protein>
    <recommendedName>
        <fullName evidence="1">LPS-assembly lipoprotein LptM</fullName>
    </recommendedName>
</protein>
<reference key="1">
    <citation type="journal article" date="2002" name="Proc. Natl. Acad. Sci. U.S.A.">
        <title>Extensive mosaic structure revealed by the complete genome sequence of uropathogenic Escherichia coli.</title>
        <authorList>
            <person name="Welch R.A."/>
            <person name="Burland V."/>
            <person name="Plunkett G. III"/>
            <person name="Redford P."/>
            <person name="Roesch P."/>
            <person name="Rasko D."/>
            <person name="Buckles E.L."/>
            <person name="Liou S.-R."/>
            <person name="Boutin A."/>
            <person name="Hackett J."/>
            <person name="Stroud D."/>
            <person name="Mayhew G.F."/>
            <person name="Rose D.J."/>
            <person name="Zhou S."/>
            <person name="Schwartz D.C."/>
            <person name="Perna N.T."/>
            <person name="Mobley H.L.T."/>
            <person name="Donnenberg M.S."/>
            <person name="Blattner F.R."/>
        </authorList>
    </citation>
    <scope>NUCLEOTIDE SEQUENCE [LARGE SCALE GENOMIC DNA]</scope>
    <source>
        <strain>CFT073 / ATCC 700928 / UPEC</strain>
    </source>
</reference>
<dbReference type="EMBL" id="AE014075">
    <property type="protein sequence ID" value="AAN83162.1"/>
    <property type="molecule type" value="Genomic_DNA"/>
</dbReference>
<dbReference type="RefSeq" id="WP_000799889.1">
    <property type="nucleotide sequence ID" value="NZ_CP051263.1"/>
</dbReference>
<dbReference type="SMR" id="P0ADN7"/>
<dbReference type="STRING" id="199310.c4729"/>
<dbReference type="KEGG" id="ecc:c4729"/>
<dbReference type="eggNOG" id="COG5567">
    <property type="taxonomic scope" value="Bacteria"/>
</dbReference>
<dbReference type="HOGENOM" id="CLU_200497_0_0_6"/>
<dbReference type="BioCyc" id="ECOL199310:C4729-MONOMER"/>
<dbReference type="Proteomes" id="UP000001410">
    <property type="component" value="Chromosome"/>
</dbReference>
<dbReference type="GO" id="GO:0009279">
    <property type="term" value="C:cell outer membrane"/>
    <property type="evidence" value="ECO:0007669"/>
    <property type="project" value="UniProtKB-SubCell"/>
</dbReference>
<dbReference type="InterPro" id="IPR032831">
    <property type="entry name" value="LptM_cons"/>
</dbReference>
<dbReference type="NCBIfam" id="NF047847">
    <property type="entry name" value="SS_mature_LptM"/>
    <property type="match status" value="1"/>
</dbReference>
<dbReference type="Pfam" id="PF13627">
    <property type="entry name" value="LptM_cons"/>
    <property type="match status" value="1"/>
</dbReference>
<dbReference type="PROSITE" id="PS51257">
    <property type="entry name" value="PROKAR_LIPOPROTEIN"/>
    <property type="match status" value="1"/>
</dbReference>
<evidence type="ECO:0000250" key="1">
    <source>
        <dbReference type="UniProtKB" id="P0ADN6"/>
    </source>
</evidence>
<evidence type="ECO:0000255" key="2">
    <source>
        <dbReference type="PROSITE-ProRule" id="PRU00303"/>
    </source>
</evidence>
<evidence type="ECO:0000256" key="3">
    <source>
        <dbReference type="SAM" id="MobiDB-lite"/>
    </source>
</evidence>
<evidence type="ECO:0000305" key="4"/>
<gene>
    <name evidence="1" type="primary">lptM</name>
    <name type="synonym">yifL</name>
    <name type="ordered locus">c4729</name>
</gene>
<organism>
    <name type="scientific">Escherichia coli O6:H1 (strain CFT073 / ATCC 700928 / UPEC)</name>
    <dbReference type="NCBI Taxonomy" id="199310"/>
    <lineage>
        <taxon>Bacteria</taxon>
        <taxon>Pseudomonadati</taxon>
        <taxon>Pseudomonadota</taxon>
        <taxon>Gammaproteobacteria</taxon>
        <taxon>Enterobacterales</taxon>
        <taxon>Enterobacteriaceae</taxon>
        <taxon>Escherichia</taxon>
    </lineage>
</organism>
<proteinExistence type="inferred from homology"/>
<keyword id="KW-0998">Cell outer membrane</keyword>
<keyword id="KW-0449">Lipoprotein</keyword>
<keyword id="KW-0472">Membrane</keyword>
<keyword id="KW-0564">Palmitate</keyword>
<keyword id="KW-1185">Reference proteome</keyword>
<keyword id="KW-0732">Signal</keyword>
<sequence>MKNVFKALTVLLTLFSLTGCGLKGPLYFPPADKNAPPPTKPVETQTQSTVPDKNDRATGDGPSQVNY</sequence>
<name>LPTM_ECOL6</name>